<gene>
    <name evidence="1" type="primary">hemA</name>
    <name type="ordered locus">XOO3409</name>
</gene>
<protein>
    <recommendedName>
        <fullName evidence="1">Glutamyl-tRNA reductase</fullName>
        <shortName evidence="1">GluTR</shortName>
        <ecNumber evidence="1">1.2.1.70</ecNumber>
    </recommendedName>
</protein>
<proteinExistence type="inferred from homology"/>
<dbReference type="EC" id="1.2.1.70" evidence="1"/>
<dbReference type="EMBL" id="AP008229">
    <property type="protein sequence ID" value="BAE70164.1"/>
    <property type="molecule type" value="Genomic_DNA"/>
</dbReference>
<dbReference type="RefSeq" id="WP_011409263.1">
    <property type="nucleotide sequence ID" value="NC_007705.1"/>
</dbReference>
<dbReference type="SMR" id="Q2NZW3"/>
<dbReference type="KEGG" id="xom:XOO3409"/>
<dbReference type="HOGENOM" id="CLU_035113_2_2_6"/>
<dbReference type="UniPathway" id="UPA00251">
    <property type="reaction ID" value="UER00316"/>
</dbReference>
<dbReference type="GO" id="GO:0008883">
    <property type="term" value="F:glutamyl-tRNA reductase activity"/>
    <property type="evidence" value="ECO:0007669"/>
    <property type="project" value="UniProtKB-UniRule"/>
</dbReference>
<dbReference type="GO" id="GO:0050661">
    <property type="term" value="F:NADP binding"/>
    <property type="evidence" value="ECO:0007669"/>
    <property type="project" value="InterPro"/>
</dbReference>
<dbReference type="GO" id="GO:0019353">
    <property type="term" value="P:protoporphyrinogen IX biosynthetic process from glutamate"/>
    <property type="evidence" value="ECO:0007669"/>
    <property type="project" value="TreeGrafter"/>
</dbReference>
<dbReference type="CDD" id="cd05213">
    <property type="entry name" value="NAD_bind_Glutamyl_tRNA_reduct"/>
    <property type="match status" value="1"/>
</dbReference>
<dbReference type="FunFam" id="3.30.460.30:FF:000001">
    <property type="entry name" value="Glutamyl-tRNA reductase"/>
    <property type="match status" value="1"/>
</dbReference>
<dbReference type="FunFam" id="3.40.50.720:FF:000031">
    <property type="entry name" value="Glutamyl-tRNA reductase"/>
    <property type="match status" value="1"/>
</dbReference>
<dbReference type="Gene3D" id="3.30.460.30">
    <property type="entry name" value="Glutamyl-tRNA reductase, N-terminal domain"/>
    <property type="match status" value="1"/>
</dbReference>
<dbReference type="Gene3D" id="3.40.50.720">
    <property type="entry name" value="NAD(P)-binding Rossmann-like Domain"/>
    <property type="match status" value="1"/>
</dbReference>
<dbReference type="HAMAP" id="MF_00087">
    <property type="entry name" value="Glu_tRNA_reductase"/>
    <property type="match status" value="1"/>
</dbReference>
<dbReference type="InterPro" id="IPR000343">
    <property type="entry name" value="4pyrrol_synth_GluRdtase"/>
</dbReference>
<dbReference type="InterPro" id="IPR015896">
    <property type="entry name" value="4pyrrol_synth_GluRdtase_dimer"/>
</dbReference>
<dbReference type="InterPro" id="IPR015895">
    <property type="entry name" value="4pyrrol_synth_GluRdtase_N"/>
</dbReference>
<dbReference type="InterPro" id="IPR018214">
    <property type="entry name" value="GluRdtase_CS"/>
</dbReference>
<dbReference type="InterPro" id="IPR036453">
    <property type="entry name" value="GluRdtase_dimer_dom_sf"/>
</dbReference>
<dbReference type="InterPro" id="IPR036343">
    <property type="entry name" value="GluRdtase_N_sf"/>
</dbReference>
<dbReference type="InterPro" id="IPR036291">
    <property type="entry name" value="NAD(P)-bd_dom_sf"/>
</dbReference>
<dbReference type="InterPro" id="IPR006151">
    <property type="entry name" value="Shikm_DH/Glu-tRNA_Rdtase"/>
</dbReference>
<dbReference type="NCBIfam" id="TIGR01035">
    <property type="entry name" value="hemA"/>
    <property type="match status" value="1"/>
</dbReference>
<dbReference type="PANTHER" id="PTHR43013">
    <property type="entry name" value="GLUTAMYL-TRNA REDUCTASE"/>
    <property type="match status" value="1"/>
</dbReference>
<dbReference type="PANTHER" id="PTHR43013:SF1">
    <property type="entry name" value="GLUTAMYL-TRNA REDUCTASE"/>
    <property type="match status" value="1"/>
</dbReference>
<dbReference type="Pfam" id="PF00745">
    <property type="entry name" value="GlutR_dimer"/>
    <property type="match status" value="1"/>
</dbReference>
<dbReference type="Pfam" id="PF05201">
    <property type="entry name" value="GlutR_N"/>
    <property type="match status" value="1"/>
</dbReference>
<dbReference type="Pfam" id="PF01488">
    <property type="entry name" value="Shikimate_DH"/>
    <property type="match status" value="1"/>
</dbReference>
<dbReference type="PIRSF" id="PIRSF000445">
    <property type="entry name" value="4pyrrol_synth_GluRdtase"/>
    <property type="match status" value="1"/>
</dbReference>
<dbReference type="SUPFAM" id="SSF69742">
    <property type="entry name" value="Glutamyl tRNA-reductase catalytic, N-terminal domain"/>
    <property type="match status" value="1"/>
</dbReference>
<dbReference type="SUPFAM" id="SSF69075">
    <property type="entry name" value="Glutamyl tRNA-reductase dimerization domain"/>
    <property type="match status" value="1"/>
</dbReference>
<dbReference type="SUPFAM" id="SSF51735">
    <property type="entry name" value="NAD(P)-binding Rossmann-fold domains"/>
    <property type="match status" value="1"/>
</dbReference>
<dbReference type="PROSITE" id="PS00747">
    <property type="entry name" value="GLUTR"/>
    <property type="match status" value="1"/>
</dbReference>
<comment type="function">
    <text evidence="1">Catalyzes the NADPH-dependent reduction of glutamyl-tRNA(Glu) to glutamate 1-semialdehyde (GSA).</text>
</comment>
<comment type="catalytic activity">
    <reaction evidence="1">
        <text>(S)-4-amino-5-oxopentanoate + tRNA(Glu) + NADP(+) = L-glutamyl-tRNA(Glu) + NADPH + H(+)</text>
        <dbReference type="Rhea" id="RHEA:12344"/>
        <dbReference type="Rhea" id="RHEA-COMP:9663"/>
        <dbReference type="Rhea" id="RHEA-COMP:9680"/>
        <dbReference type="ChEBI" id="CHEBI:15378"/>
        <dbReference type="ChEBI" id="CHEBI:57501"/>
        <dbReference type="ChEBI" id="CHEBI:57783"/>
        <dbReference type="ChEBI" id="CHEBI:58349"/>
        <dbReference type="ChEBI" id="CHEBI:78442"/>
        <dbReference type="ChEBI" id="CHEBI:78520"/>
        <dbReference type="EC" id="1.2.1.70"/>
    </reaction>
</comment>
<comment type="pathway">
    <text evidence="1">Porphyrin-containing compound metabolism; protoporphyrin-IX biosynthesis; 5-aminolevulinate from L-glutamyl-tRNA(Glu): step 1/2.</text>
</comment>
<comment type="subunit">
    <text evidence="1">Homodimer.</text>
</comment>
<comment type="domain">
    <text evidence="1">Possesses an unusual extended V-shaped dimeric structure with each monomer consisting of three distinct domains arranged along a curved 'spinal' alpha-helix. The N-terminal catalytic domain specifically recognizes the glutamate moiety of the substrate. The second domain is the NADPH-binding domain, and the third C-terminal domain is responsible for dimerization.</text>
</comment>
<comment type="miscellaneous">
    <text evidence="1">During catalysis, the active site Cys acts as a nucleophile attacking the alpha-carbonyl group of tRNA-bound glutamate with the formation of a thioester intermediate between enzyme and glutamate, and the concomitant release of tRNA(Glu). The thioester intermediate is finally reduced by direct hydride transfer from NADPH, to form the product GSA.</text>
</comment>
<comment type="similarity">
    <text evidence="1">Belongs to the glutamyl-tRNA reductase family.</text>
</comment>
<feature type="chain" id="PRO_1000004725" description="Glutamyl-tRNA reductase">
    <location>
        <begin position="1"/>
        <end position="432"/>
    </location>
</feature>
<feature type="region of interest" description="Disordered" evidence="2">
    <location>
        <begin position="407"/>
        <end position="432"/>
    </location>
</feature>
<feature type="active site" description="Nucleophile" evidence="1">
    <location>
        <position position="50"/>
    </location>
</feature>
<feature type="binding site" evidence="1">
    <location>
        <begin position="49"/>
        <end position="52"/>
    </location>
    <ligand>
        <name>substrate</name>
    </ligand>
</feature>
<feature type="binding site" evidence="1">
    <location>
        <position position="101"/>
    </location>
    <ligand>
        <name>substrate</name>
    </ligand>
</feature>
<feature type="binding site" evidence="1">
    <location>
        <begin position="106"/>
        <end position="108"/>
    </location>
    <ligand>
        <name>substrate</name>
    </ligand>
</feature>
<feature type="binding site" evidence="1">
    <location>
        <position position="112"/>
    </location>
    <ligand>
        <name>substrate</name>
    </ligand>
</feature>
<feature type="binding site" evidence="1">
    <location>
        <begin position="181"/>
        <end position="186"/>
    </location>
    <ligand>
        <name>NADP(+)</name>
        <dbReference type="ChEBI" id="CHEBI:58349"/>
    </ligand>
</feature>
<feature type="site" description="Important for activity" evidence="1">
    <location>
        <position position="91"/>
    </location>
</feature>
<keyword id="KW-0521">NADP</keyword>
<keyword id="KW-0560">Oxidoreductase</keyword>
<keyword id="KW-0627">Porphyrin biosynthesis</keyword>
<reference key="1">
    <citation type="journal article" date="2005" name="Jpn. Agric. Res. Q.">
        <title>Genome sequence of Xanthomonas oryzae pv. oryzae suggests contribution of large numbers of effector genes and insertion sequences to its race diversity.</title>
        <authorList>
            <person name="Ochiai H."/>
            <person name="Inoue Y."/>
            <person name="Takeya M."/>
            <person name="Sasaki A."/>
            <person name="Kaku H."/>
        </authorList>
    </citation>
    <scope>NUCLEOTIDE SEQUENCE [LARGE SCALE GENOMIC DNA]</scope>
    <source>
        <strain>MAFF 311018</strain>
    </source>
</reference>
<accession>Q2NZW3</accession>
<evidence type="ECO:0000255" key="1">
    <source>
        <dbReference type="HAMAP-Rule" id="MF_00087"/>
    </source>
</evidence>
<evidence type="ECO:0000256" key="2">
    <source>
        <dbReference type="SAM" id="MobiDB-lite"/>
    </source>
</evidence>
<sequence length="432" mass="47441">MTLWVLGLNHQTAPVDLRERAAFAGDALPRALESLRALPQVSEAALLSTCNRTELYAMADEARSLVNWLETHAPGLSGYLYQHQEAEAVRHLFRVATGLDSMVLGEPQILGQVKDAWAVARAHGALGSGLDRLFQQTFSVAKRARTDTRVGANPVSVASTAVRLAQESFARLNESTVLLIGAGETIELAAKHLSESRVRRLLIANRTLAHAQTLASQHGGYALPLTDLERHLAEADVVFSATAAREPLVTRVQVEQALRARKRKPMLLFDLAVPRDIEASVDELSDAYLYTVDDLERAVEDNRRGRREAADQAEAIIDLQVARYVETLQATTRQAPLKRLRAFGDSTRDELLAKARQQLHNGKPTDEVLEQLAHALTNRLLHPPTAALRDAALNNDLELTTAADRLFPEKPGYQHPPIATPIVRTDDADPAP</sequence>
<organism>
    <name type="scientific">Xanthomonas oryzae pv. oryzae (strain MAFF 311018)</name>
    <dbReference type="NCBI Taxonomy" id="342109"/>
    <lineage>
        <taxon>Bacteria</taxon>
        <taxon>Pseudomonadati</taxon>
        <taxon>Pseudomonadota</taxon>
        <taxon>Gammaproteobacteria</taxon>
        <taxon>Lysobacterales</taxon>
        <taxon>Lysobacteraceae</taxon>
        <taxon>Xanthomonas</taxon>
    </lineage>
</organism>
<name>HEM1_XANOM</name>